<feature type="chain" id="PRO_1000014479" description="NAD(P)H-quinone oxidoreductase chain 4">
    <location>
        <begin position="1"/>
        <end position="526"/>
    </location>
</feature>
<feature type="transmembrane region" description="Helical" evidence="1">
    <location>
        <begin position="5"/>
        <end position="25"/>
    </location>
</feature>
<feature type="transmembrane region" description="Helical" evidence="1">
    <location>
        <begin position="32"/>
        <end position="52"/>
    </location>
</feature>
<feature type="transmembrane region" description="Helical" evidence="1">
    <location>
        <begin position="87"/>
        <end position="107"/>
    </location>
</feature>
<feature type="transmembrane region" description="Helical" evidence="1">
    <location>
        <begin position="111"/>
        <end position="131"/>
    </location>
</feature>
<feature type="transmembrane region" description="Helical" evidence="1">
    <location>
        <begin position="133"/>
        <end position="153"/>
    </location>
</feature>
<feature type="transmembrane region" description="Helical" evidence="1">
    <location>
        <begin position="165"/>
        <end position="185"/>
    </location>
</feature>
<feature type="transmembrane region" description="Helical" evidence="1">
    <location>
        <begin position="211"/>
        <end position="231"/>
    </location>
</feature>
<feature type="transmembrane region" description="Helical" evidence="1">
    <location>
        <begin position="239"/>
        <end position="259"/>
    </location>
</feature>
<feature type="transmembrane region" description="Helical" evidence="1">
    <location>
        <begin position="273"/>
        <end position="293"/>
    </location>
</feature>
<feature type="transmembrane region" description="Helical" evidence="1">
    <location>
        <begin position="302"/>
        <end position="320"/>
    </location>
</feature>
<feature type="transmembrane region" description="Helical" evidence="1">
    <location>
        <begin position="331"/>
        <end position="351"/>
    </location>
</feature>
<feature type="transmembrane region" description="Helical" evidence="1">
    <location>
        <begin position="371"/>
        <end position="393"/>
    </location>
</feature>
<feature type="transmembrane region" description="Helical" evidence="1">
    <location>
        <begin position="414"/>
        <end position="434"/>
    </location>
</feature>
<reference key="1">
    <citation type="journal article" date="2003" name="DNA Res.">
        <title>Complete genome structure of Gloeobacter violaceus PCC 7421, a cyanobacterium that lacks thylakoids.</title>
        <authorList>
            <person name="Nakamura Y."/>
            <person name="Kaneko T."/>
            <person name="Sato S."/>
            <person name="Mimuro M."/>
            <person name="Miyashita H."/>
            <person name="Tsuchiya T."/>
            <person name="Sasamoto S."/>
            <person name="Watanabe A."/>
            <person name="Kawashima K."/>
            <person name="Kishida Y."/>
            <person name="Kiyokawa C."/>
            <person name="Kohara M."/>
            <person name="Matsumoto M."/>
            <person name="Matsuno A."/>
            <person name="Nakazaki N."/>
            <person name="Shimpo S."/>
            <person name="Takeuchi C."/>
            <person name="Yamada M."/>
            <person name="Tabata S."/>
        </authorList>
    </citation>
    <scope>NUCLEOTIDE SEQUENCE [LARGE SCALE GENOMIC DNA]</scope>
    <source>
        <strain>ATCC 29082 / PCC 7421</strain>
    </source>
</reference>
<comment type="function">
    <text evidence="1">NDH-1 shuttles electrons from NAD(P)H, via FMN and iron-sulfur (Fe-S) centers, to quinones in the respiratory chain. The immediate electron acceptor for the enzyme in this species is believed to be plastoquinone. Couples the redox reaction to proton translocation (for every two electrons transferred, four hydrogen ions are translocated across the cytoplasmic membrane), and thus conserves the redox energy in a proton gradient.</text>
</comment>
<comment type="catalytic activity">
    <reaction evidence="1">
        <text>a plastoquinone + NADH + (n+1) H(+)(in) = a plastoquinol + NAD(+) + n H(+)(out)</text>
        <dbReference type="Rhea" id="RHEA:42608"/>
        <dbReference type="Rhea" id="RHEA-COMP:9561"/>
        <dbReference type="Rhea" id="RHEA-COMP:9562"/>
        <dbReference type="ChEBI" id="CHEBI:15378"/>
        <dbReference type="ChEBI" id="CHEBI:17757"/>
        <dbReference type="ChEBI" id="CHEBI:57540"/>
        <dbReference type="ChEBI" id="CHEBI:57945"/>
        <dbReference type="ChEBI" id="CHEBI:62192"/>
    </reaction>
</comment>
<comment type="catalytic activity">
    <reaction evidence="1">
        <text>a plastoquinone + NADPH + (n+1) H(+)(in) = a plastoquinol + NADP(+) + n H(+)(out)</text>
        <dbReference type="Rhea" id="RHEA:42612"/>
        <dbReference type="Rhea" id="RHEA-COMP:9561"/>
        <dbReference type="Rhea" id="RHEA-COMP:9562"/>
        <dbReference type="ChEBI" id="CHEBI:15378"/>
        <dbReference type="ChEBI" id="CHEBI:17757"/>
        <dbReference type="ChEBI" id="CHEBI:57783"/>
        <dbReference type="ChEBI" id="CHEBI:58349"/>
        <dbReference type="ChEBI" id="CHEBI:62192"/>
    </reaction>
</comment>
<comment type="subcellular location">
    <subcellularLocation>
        <location evidence="1">Cell inner membrane</location>
        <topology evidence="1">Multi-pass membrane protein</topology>
    </subcellularLocation>
</comment>
<comment type="similarity">
    <text evidence="1">Belongs to the complex I subunit 4 family.</text>
</comment>
<proteinExistence type="inferred from homology"/>
<gene>
    <name evidence="1" type="primary">ndhD</name>
    <name type="ordered locus">glr0219</name>
</gene>
<dbReference type="EC" id="7.1.1.-" evidence="1"/>
<dbReference type="EMBL" id="BA000045">
    <property type="protein sequence ID" value="BAC88160.1"/>
    <property type="molecule type" value="Genomic_DNA"/>
</dbReference>
<dbReference type="RefSeq" id="NP_923165.1">
    <property type="nucleotide sequence ID" value="NC_005125.1"/>
</dbReference>
<dbReference type="SMR" id="Q7NP39"/>
<dbReference type="FunCoup" id="Q7NP39">
    <property type="interactions" value="59"/>
</dbReference>
<dbReference type="STRING" id="251221.gene:10757691"/>
<dbReference type="EnsemblBacteria" id="BAC88160">
    <property type="protein sequence ID" value="BAC88160"/>
    <property type="gene ID" value="BAC88160"/>
</dbReference>
<dbReference type="KEGG" id="gvi:glr0219"/>
<dbReference type="PATRIC" id="fig|251221.4.peg.221"/>
<dbReference type="eggNOG" id="COG1008">
    <property type="taxonomic scope" value="Bacteria"/>
</dbReference>
<dbReference type="HOGENOM" id="CLU_007100_4_0_3"/>
<dbReference type="InParanoid" id="Q7NP39"/>
<dbReference type="OrthoDB" id="9811718at2"/>
<dbReference type="PhylomeDB" id="Q7NP39"/>
<dbReference type="Proteomes" id="UP000000557">
    <property type="component" value="Chromosome"/>
</dbReference>
<dbReference type="GO" id="GO:0005886">
    <property type="term" value="C:plasma membrane"/>
    <property type="evidence" value="ECO:0007669"/>
    <property type="project" value="UniProtKB-SubCell"/>
</dbReference>
<dbReference type="GO" id="GO:0008137">
    <property type="term" value="F:NADH dehydrogenase (ubiquinone) activity"/>
    <property type="evidence" value="ECO:0007669"/>
    <property type="project" value="InterPro"/>
</dbReference>
<dbReference type="GO" id="GO:0048039">
    <property type="term" value="F:ubiquinone binding"/>
    <property type="evidence" value="ECO:0000318"/>
    <property type="project" value="GO_Central"/>
</dbReference>
<dbReference type="GO" id="GO:0009060">
    <property type="term" value="P:aerobic respiration"/>
    <property type="evidence" value="ECO:0000318"/>
    <property type="project" value="GO_Central"/>
</dbReference>
<dbReference type="GO" id="GO:0042773">
    <property type="term" value="P:ATP synthesis coupled electron transport"/>
    <property type="evidence" value="ECO:0007669"/>
    <property type="project" value="InterPro"/>
</dbReference>
<dbReference type="GO" id="GO:0015990">
    <property type="term" value="P:electron transport coupled proton transport"/>
    <property type="evidence" value="ECO:0000318"/>
    <property type="project" value="GO_Central"/>
</dbReference>
<dbReference type="HAMAP" id="MF_00491">
    <property type="entry name" value="NDH1_NuoM"/>
    <property type="match status" value="1"/>
</dbReference>
<dbReference type="InterPro" id="IPR022997">
    <property type="entry name" value="NADH_Q_OxRdtase_chain4"/>
</dbReference>
<dbReference type="InterPro" id="IPR010227">
    <property type="entry name" value="NADH_Q_OxRdtase_chainM/4"/>
</dbReference>
<dbReference type="InterPro" id="IPR003918">
    <property type="entry name" value="NADH_UbQ_OxRdtase"/>
</dbReference>
<dbReference type="InterPro" id="IPR001750">
    <property type="entry name" value="ND/Mrp_TM"/>
</dbReference>
<dbReference type="NCBIfam" id="TIGR01972">
    <property type="entry name" value="NDH_I_M"/>
    <property type="match status" value="1"/>
</dbReference>
<dbReference type="NCBIfam" id="NF002713">
    <property type="entry name" value="PRK02546.1"/>
    <property type="match status" value="1"/>
</dbReference>
<dbReference type="NCBIfam" id="NF009212">
    <property type="entry name" value="PRK12561.1"/>
    <property type="match status" value="1"/>
</dbReference>
<dbReference type="PANTHER" id="PTHR43507:SF21">
    <property type="entry name" value="NAD(P)H-QUINONE OXIDOREDUCTASE CHAIN 4, CHLOROPLASTIC"/>
    <property type="match status" value="1"/>
</dbReference>
<dbReference type="PANTHER" id="PTHR43507">
    <property type="entry name" value="NADH-UBIQUINONE OXIDOREDUCTASE CHAIN 4"/>
    <property type="match status" value="1"/>
</dbReference>
<dbReference type="Pfam" id="PF00361">
    <property type="entry name" value="Proton_antipo_M"/>
    <property type="match status" value="1"/>
</dbReference>
<dbReference type="PRINTS" id="PR01437">
    <property type="entry name" value="NUOXDRDTASE4"/>
</dbReference>
<protein>
    <recommendedName>
        <fullName evidence="1">NAD(P)H-quinone oxidoreductase chain 4</fullName>
        <ecNumber evidence="1">7.1.1.-</ecNumber>
    </recommendedName>
    <alternativeName>
        <fullName evidence="1">NAD(P)H dehydrogenase I, chain 4</fullName>
    </alternativeName>
    <alternativeName>
        <fullName evidence="1">NDH-1, chain 4</fullName>
    </alternativeName>
</protein>
<accession>Q7NP39</accession>
<sequence>MQNMFPWLTVIILLPLVAALAVPLIPEKQVKWYSFAVCLVDFVLMVAAFFTSYDLSNPDIQLAERYRWMPQIGLEWSVGADGLSMPLILLTGFITALATLAAWPVTLRPRMFHFLMLAMLAGMVGVFAVQDMVLFFLFFELELVPVYLMLAIWGGKGRLYAATKFILYTAVGSLFILVVGLAMYFYGDLRTFNMVELAAKNYDPTFQNLCFLGLLIAYAVKLPIFPLHTWLPDAHGEATAPVHMLLAGILLKMGGYALIRMNVGFFPEATQLFAPLLIVLGIVNIIYAALTSFGQRNLKRKIAYSSISHMGFVLIGVGSLSEIGMGGAMLQMISHGLIGASLFFLVGATYDRTHTLILSEMGGIAPKMPKIFAMFTACSMASLALPGMSGFVAELMVFVGMATTDAYSFQFKALVVLFAAFGVILTPIYLLSMLREIFYGTLNHAVVHEEDLVDAEPREVFIIASLLVPIFGIGLYPKLTTDLYAPTTDQLTRVTRERIARAAPPPALLSGVYSVEFADRDRVSLR</sequence>
<organism>
    <name type="scientific">Gloeobacter violaceus (strain ATCC 29082 / PCC 7421)</name>
    <dbReference type="NCBI Taxonomy" id="251221"/>
    <lineage>
        <taxon>Bacteria</taxon>
        <taxon>Bacillati</taxon>
        <taxon>Cyanobacteriota</taxon>
        <taxon>Cyanophyceae</taxon>
        <taxon>Gloeobacterales</taxon>
        <taxon>Gloeobacteraceae</taxon>
        <taxon>Gloeobacter</taxon>
    </lineage>
</organism>
<evidence type="ECO:0000255" key="1">
    <source>
        <dbReference type="HAMAP-Rule" id="MF_00491"/>
    </source>
</evidence>
<keyword id="KW-0997">Cell inner membrane</keyword>
<keyword id="KW-1003">Cell membrane</keyword>
<keyword id="KW-0472">Membrane</keyword>
<keyword id="KW-0520">NAD</keyword>
<keyword id="KW-0521">NADP</keyword>
<keyword id="KW-0618">Plastoquinone</keyword>
<keyword id="KW-0874">Quinone</keyword>
<keyword id="KW-1185">Reference proteome</keyword>
<keyword id="KW-1278">Translocase</keyword>
<keyword id="KW-0812">Transmembrane</keyword>
<keyword id="KW-1133">Transmembrane helix</keyword>
<name>NU4C_GLOVI</name>